<name>RL15_BACCQ</name>
<keyword id="KW-0687">Ribonucleoprotein</keyword>
<keyword id="KW-0689">Ribosomal protein</keyword>
<keyword id="KW-0694">RNA-binding</keyword>
<keyword id="KW-0699">rRNA-binding</keyword>
<proteinExistence type="inferred from homology"/>
<gene>
    <name evidence="1" type="primary">rplO</name>
    <name type="ordered locus">BCQ_0142</name>
</gene>
<accession>B9IZL3</accession>
<protein>
    <recommendedName>
        <fullName evidence="1">Large ribosomal subunit protein uL15</fullName>
    </recommendedName>
    <alternativeName>
        <fullName evidence="3">50S ribosomal protein L15</fullName>
    </alternativeName>
</protein>
<sequence>MKLHELKPAEGSRKVRNRVGRGIGSGNGKTAGKGHKGQNARSGGGVRLGFEGGQTPLFRRLPKRGFTNINRKEFAIVNLSTLNRFEDGTEVTPELLLETGVISKLNDGVKILASGAVEKKLTVKAHKFSSSAKEAIEAAGGSVEVI</sequence>
<comment type="function">
    <text evidence="1">Binds to the 23S rRNA.</text>
</comment>
<comment type="subunit">
    <text evidence="1">Part of the 50S ribosomal subunit.</text>
</comment>
<comment type="similarity">
    <text evidence="1">Belongs to the universal ribosomal protein uL15 family.</text>
</comment>
<organism>
    <name type="scientific">Bacillus cereus (strain Q1)</name>
    <dbReference type="NCBI Taxonomy" id="361100"/>
    <lineage>
        <taxon>Bacteria</taxon>
        <taxon>Bacillati</taxon>
        <taxon>Bacillota</taxon>
        <taxon>Bacilli</taxon>
        <taxon>Bacillales</taxon>
        <taxon>Bacillaceae</taxon>
        <taxon>Bacillus</taxon>
        <taxon>Bacillus cereus group</taxon>
    </lineage>
</organism>
<dbReference type="EMBL" id="CP000227">
    <property type="protein sequence ID" value="ACM10657.1"/>
    <property type="molecule type" value="Genomic_DNA"/>
</dbReference>
<dbReference type="SMR" id="B9IZL3"/>
<dbReference type="KEGG" id="bcq:BCQ_0142"/>
<dbReference type="HOGENOM" id="CLU_055188_4_2_9"/>
<dbReference type="Proteomes" id="UP000000441">
    <property type="component" value="Chromosome"/>
</dbReference>
<dbReference type="GO" id="GO:0022625">
    <property type="term" value="C:cytosolic large ribosomal subunit"/>
    <property type="evidence" value="ECO:0007669"/>
    <property type="project" value="TreeGrafter"/>
</dbReference>
<dbReference type="GO" id="GO:0019843">
    <property type="term" value="F:rRNA binding"/>
    <property type="evidence" value="ECO:0007669"/>
    <property type="project" value="UniProtKB-UniRule"/>
</dbReference>
<dbReference type="GO" id="GO:0003735">
    <property type="term" value="F:structural constituent of ribosome"/>
    <property type="evidence" value="ECO:0007669"/>
    <property type="project" value="InterPro"/>
</dbReference>
<dbReference type="GO" id="GO:0006412">
    <property type="term" value="P:translation"/>
    <property type="evidence" value="ECO:0007669"/>
    <property type="project" value="UniProtKB-UniRule"/>
</dbReference>
<dbReference type="FunFam" id="3.100.10.10:FF:000004">
    <property type="entry name" value="50S ribosomal protein L15"/>
    <property type="match status" value="1"/>
</dbReference>
<dbReference type="Gene3D" id="3.100.10.10">
    <property type="match status" value="1"/>
</dbReference>
<dbReference type="HAMAP" id="MF_01341">
    <property type="entry name" value="Ribosomal_uL15"/>
    <property type="match status" value="1"/>
</dbReference>
<dbReference type="InterPro" id="IPR030878">
    <property type="entry name" value="Ribosomal_uL15"/>
</dbReference>
<dbReference type="InterPro" id="IPR021131">
    <property type="entry name" value="Ribosomal_uL15/eL18"/>
</dbReference>
<dbReference type="InterPro" id="IPR036227">
    <property type="entry name" value="Ribosomal_uL15/eL18_sf"/>
</dbReference>
<dbReference type="InterPro" id="IPR005749">
    <property type="entry name" value="Ribosomal_uL15_bac-type"/>
</dbReference>
<dbReference type="InterPro" id="IPR001196">
    <property type="entry name" value="Ribosomal_uL15_CS"/>
</dbReference>
<dbReference type="NCBIfam" id="TIGR01071">
    <property type="entry name" value="rplO_bact"/>
    <property type="match status" value="1"/>
</dbReference>
<dbReference type="PANTHER" id="PTHR12934">
    <property type="entry name" value="50S RIBOSOMAL PROTEIN L15"/>
    <property type="match status" value="1"/>
</dbReference>
<dbReference type="PANTHER" id="PTHR12934:SF11">
    <property type="entry name" value="LARGE RIBOSOMAL SUBUNIT PROTEIN UL15M"/>
    <property type="match status" value="1"/>
</dbReference>
<dbReference type="Pfam" id="PF00828">
    <property type="entry name" value="Ribosomal_L27A"/>
    <property type="match status" value="1"/>
</dbReference>
<dbReference type="SUPFAM" id="SSF52080">
    <property type="entry name" value="Ribosomal proteins L15p and L18e"/>
    <property type="match status" value="1"/>
</dbReference>
<dbReference type="PROSITE" id="PS00475">
    <property type="entry name" value="RIBOSOMAL_L15"/>
    <property type="match status" value="1"/>
</dbReference>
<evidence type="ECO:0000255" key="1">
    <source>
        <dbReference type="HAMAP-Rule" id="MF_01341"/>
    </source>
</evidence>
<evidence type="ECO:0000256" key="2">
    <source>
        <dbReference type="SAM" id="MobiDB-lite"/>
    </source>
</evidence>
<evidence type="ECO:0000305" key="3"/>
<feature type="chain" id="PRO_1000166275" description="Large ribosomal subunit protein uL15">
    <location>
        <begin position="1"/>
        <end position="146"/>
    </location>
</feature>
<feature type="region of interest" description="Disordered" evidence="2">
    <location>
        <begin position="1"/>
        <end position="52"/>
    </location>
</feature>
<feature type="compositionally biased region" description="Basic and acidic residues" evidence="2">
    <location>
        <begin position="1"/>
        <end position="13"/>
    </location>
</feature>
<feature type="compositionally biased region" description="Gly residues" evidence="2">
    <location>
        <begin position="21"/>
        <end position="31"/>
    </location>
</feature>
<feature type="compositionally biased region" description="Gly residues" evidence="2">
    <location>
        <begin position="42"/>
        <end position="52"/>
    </location>
</feature>
<reference key="1">
    <citation type="journal article" date="2009" name="J. Bacteriol.">
        <title>Complete genome sequence of the extremophilic Bacillus cereus strain Q1 with industrial applications.</title>
        <authorList>
            <person name="Xiong Z."/>
            <person name="Jiang Y."/>
            <person name="Qi D."/>
            <person name="Lu H."/>
            <person name="Yang F."/>
            <person name="Yang J."/>
            <person name="Chen L."/>
            <person name="Sun L."/>
            <person name="Xu X."/>
            <person name="Xue Y."/>
            <person name="Zhu Y."/>
            <person name="Jin Q."/>
        </authorList>
    </citation>
    <scope>NUCLEOTIDE SEQUENCE [LARGE SCALE GENOMIC DNA]</scope>
    <source>
        <strain>Q1</strain>
    </source>
</reference>